<evidence type="ECO:0000255" key="1">
    <source>
        <dbReference type="HAMAP-Rule" id="MF_01208"/>
    </source>
</evidence>
<accession>A1US32</accession>
<protein>
    <recommendedName>
        <fullName evidence="1">Orotate phosphoribosyltransferase</fullName>
        <shortName evidence="1">OPRT</shortName>
        <shortName evidence="1">OPRTase</shortName>
        <ecNumber evidence="1">2.4.2.10</ecNumber>
    </recommendedName>
</protein>
<dbReference type="EC" id="2.4.2.10" evidence="1"/>
<dbReference type="EMBL" id="CP000524">
    <property type="protein sequence ID" value="ABM44994.1"/>
    <property type="molecule type" value="Genomic_DNA"/>
</dbReference>
<dbReference type="RefSeq" id="WP_005766538.1">
    <property type="nucleotide sequence ID" value="NC_008783.1"/>
</dbReference>
<dbReference type="SMR" id="A1US32"/>
<dbReference type="STRING" id="360095.BARBAKC583_0469"/>
<dbReference type="GeneID" id="4683831"/>
<dbReference type="KEGG" id="bbk:BARBAKC583_0469"/>
<dbReference type="PATRIC" id="fig|360095.6.peg.451"/>
<dbReference type="eggNOG" id="COG0461">
    <property type="taxonomic scope" value="Bacteria"/>
</dbReference>
<dbReference type="HOGENOM" id="CLU_074878_3_0_5"/>
<dbReference type="OrthoDB" id="9783570at2"/>
<dbReference type="UniPathway" id="UPA00070">
    <property type="reaction ID" value="UER00119"/>
</dbReference>
<dbReference type="Proteomes" id="UP000000643">
    <property type="component" value="Chromosome"/>
</dbReference>
<dbReference type="GO" id="GO:0000287">
    <property type="term" value="F:magnesium ion binding"/>
    <property type="evidence" value="ECO:0007669"/>
    <property type="project" value="UniProtKB-UniRule"/>
</dbReference>
<dbReference type="GO" id="GO:0004588">
    <property type="term" value="F:orotate phosphoribosyltransferase activity"/>
    <property type="evidence" value="ECO:0007669"/>
    <property type="project" value="UniProtKB-UniRule"/>
</dbReference>
<dbReference type="GO" id="GO:0044205">
    <property type="term" value="P:'de novo' UMP biosynthetic process"/>
    <property type="evidence" value="ECO:0007669"/>
    <property type="project" value="UniProtKB-UniRule"/>
</dbReference>
<dbReference type="GO" id="GO:0019856">
    <property type="term" value="P:pyrimidine nucleobase biosynthetic process"/>
    <property type="evidence" value="ECO:0007669"/>
    <property type="project" value="InterPro"/>
</dbReference>
<dbReference type="CDD" id="cd06223">
    <property type="entry name" value="PRTases_typeI"/>
    <property type="match status" value="1"/>
</dbReference>
<dbReference type="Gene3D" id="3.40.50.2020">
    <property type="match status" value="1"/>
</dbReference>
<dbReference type="HAMAP" id="MF_01208">
    <property type="entry name" value="PyrE"/>
    <property type="match status" value="1"/>
</dbReference>
<dbReference type="InterPro" id="IPR023031">
    <property type="entry name" value="OPRT"/>
</dbReference>
<dbReference type="InterPro" id="IPR006273">
    <property type="entry name" value="Orotate_PRibTrfase_bac"/>
</dbReference>
<dbReference type="InterPro" id="IPR000836">
    <property type="entry name" value="PRibTrfase_dom"/>
</dbReference>
<dbReference type="InterPro" id="IPR029057">
    <property type="entry name" value="PRTase-like"/>
</dbReference>
<dbReference type="NCBIfam" id="TIGR01367">
    <property type="entry name" value="pyrE_Therm"/>
    <property type="match status" value="1"/>
</dbReference>
<dbReference type="PANTHER" id="PTHR19278">
    <property type="entry name" value="OROTATE PHOSPHORIBOSYLTRANSFERASE"/>
    <property type="match status" value="1"/>
</dbReference>
<dbReference type="PANTHER" id="PTHR19278:SF9">
    <property type="entry name" value="URIDINE 5'-MONOPHOSPHATE SYNTHASE"/>
    <property type="match status" value="1"/>
</dbReference>
<dbReference type="Pfam" id="PF00156">
    <property type="entry name" value="Pribosyltran"/>
    <property type="match status" value="1"/>
</dbReference>
<dbReference type="SUPFAM" id="SSF53271">
    <property type="entry name" value="PRTase-like"/>
    <property type="match status" value="1"/>
</dbReference>
<dbReference type="PROSITE" id="PS00103">
    <property type="entry name" value="PUR_PYR_PR_TRANSFER"/>
    <property type="match status" value="1"/>
</dbReference>
<comment type="function">
    <text evidence="1">Catalyzes the transfer of a ribosyl phosphate group from 5-phosphoribose 1-diphosphate to orotate, leading to the formation of orotidine monophosphate (OMP).</text>
</comment>
<comment type="catalytic activity">
    <reaction evidence="1">
        <text>orotidine 5'-phosphate + diphosphate = orotate + 5-phospho-alpha-D-ribose 1-diphosphate</text>
        <dbReference type="Rhea" id="RHEA:10380"/>
        <dbReference type="ChEBI" id="CHEBI:30839"/>
        <dbReference type="ChEBI" id="CHEBI:33019"/>
        <dbReference type="ChEBI" id="CHEBI:57538"/>
        <dbReference type="ChEBI" id="CHEBI:58017"/>
        <dbReference type="EC" id="2.4.2.10"/>
    </reaction>
</comment>
<comment type="cofactor">
    <cofactor evidence="1">
        <name>Mg(2+)</name>
        <dbReference type="ChEBI" id="CHEBI:18420"/>
    </cofactor>
</comment>
<comment type="pathway">
    <text evidence="1">Pyrimidine metabolism; UMP biosynthesis via de novo pathway; UMP from orotate: step 1/2.</text>
</comment>
<comment type="subunit">
    <text evidence="1">Homodimer.</text>
</comment>
<comment type="similarity">
    <text evidence="1">Belongs to the purine/pyrimidine phosphoribosyltransferase family. PyrE subfamily.</text>
</comment>
<proteinExistence type="inferred from homology"/>
<reference key="1">
    <citation type="submission" date="2006-12" db="EMBL/GenBank/DDBJ databases">
        <authorList>
            <person name="Hendrix L."/>
            <person name="Mohamoud Y."/>
            <person name="Radune D."/>
            <person name="Shvartsbeyn A."/>
            <person name="Daugherty S."/>
            <person name="Dodson R."/>
            <person name="Durkin A.S."/>
            <person name="Harkins D."/>
            <person name="Huot H."/>
            <person name="Kothari S.P."/>
            <person name="Madupu R."/>
            <person name="Li J."/>
            <person name="Nelson W.C."/>
            <person name="Shrivastava S."/>
            <person name="Giglio M.G."/>
            <person name="Haft D."/>
            <person name="Selengut J."/>
            <person name="Fraser-Ligget C."/>
            <person name="Seshadri R."/>
        </authorList>
    </citation>
    <scope>NUCLEOTIDE SEQUENCE [LARGE SCALE GENOMIC DNA]</scope>
    <source>
        <strain>ATCC 35685 / KC583 / Herrer 020/F12,63</strain>
    </source>
</reference>
<gene>
    <name evidence="1" type="primary">pyrE</name>
    <name type="ordered locus">BARBAKC583_0469</name>
</gene>
<sequence>MNTQDVINIFKQADAILEGHFILTSGRHSATFLQKAKVFMHADLTEKLCRGLAQEIKRHVEGKIDYVVGPAIGGLIPSYETSRHLGVPSIWVERENGVFRLRRFEVEKGARVVIVEDIVTTGLSIRETIEALVAVEADVVASACIIDRSGGKVDVGVPLIALAEYEIVSYTRDTLPHELSKIPAVKPGSRDI</sequence>
<keyword id="KW-0328">Glycosyltransferase</keyword>
<keyword id="KW-0460">Magnesium</keyword>
<keyword id="KW-0665">Pyrimidine biosynthesis</keyword>
<keyword id="KW-0808">Transferase</keyword>
<organism>
    <name type="scientific">Bartonella bacilliformis (strain ATCC 35685 / KC583 / Herrer 020/F12,63)</name>
    <dbReference type="NCBI Taxonomy" id="360095"/>
    <lineage>
        <taxon>Bacteria</taxon>
        <taxon>Pseudomonadati</taxon>
        <taxon>Pseudomonadota</taxon>
        <taxon>Alphaproteobacteria</taxon>
        <taxon>Hyphomicrobiales</taxon>
        <taxon>Bartonellaceae</taxon>
        <taxon>Bartonella</taxon>
    </lineage>
</organism>
<name>PYRE_BARBK</name>
<feature type="chain" id="PRO_1000066206" description="Orotate phosphoribosyltransferase">
    <location>
        <begin position="1"/>
        <end position="192"/>
    </location>
</feature>
<feature type="binding site" evidence="1">
    <location>
        <begin position="116"/>
        <end position="124"/>
    </location>
    <ligand>
        <name>5-phospho-alpha-D-ribose 1-diphosphate</name>
        <dbReference type="ChEBI" id="CHEBI:58017"/>
    </ligand>
</feature>
<feature type="binding site" evidence="1">
    <location>
        <position position="120"/>
    </location>
    <ligand>
        <name>orotate</name>
        <dbReference type="ChEBI" id="CHEBI:30839"/>
    </ligand>
</feature>
<feature type="binding site" evidence="1">
    <location>
        <position position="148"/>
    </location>
    <ligand>
        <name>orotate</name>
        <dbReference type="ChEBI" id="CHEBI:30839"/>
    </ligand>
</feature>